<protein>
    <recommendedName>
        <fullName>Putative GDP-L-fucose synthase 2</fullName>
        <ecNumber evidence="2">1.1.1.271</ecNumber>
    </recommendedName>
    <alternativeName>
        <fullName>GDP-4-keto-6-deoxy-D-mannose-3,5-epimerase-4-reductase 2</fullName>
    </alternativeName>
</protein>
<organism>
    <name type="scientific">Oryza sativa subsp. japonica</name>
    <name type="common">Rice</name>
    <dbReference type="NCBI Taxonomy" id="39947"/>
    <lineage>
        <taxon>Eukaryota</taxon>
        <taxon>Viridiplantae</taxon>
        <taxon>Streptophyta</taxon>
        <taxon>Embryophyta</taxon>
        <taxon>Tracheophyta</taxon>
        <taxon>Spermatophyta</taxon>
        <taxon>Magnoliopsida</taxon>
        <taxon>Liliopsida</taxon>
        <taxon>Poales</taxon>
        <taxon>Poaceae</taxon>
        <taxon>BOP clade</taxon>
        <taxon>Oryzoideae</taxon>
        <taxon>Oryzeae</taxon>
        <taxon>Oryzinae</taxon>
        <taxon>Oryza</taxon>
        <taxon>Oryza sativa</taxon>
    </lineage>
</organism>
<keyword id="KW-0413">Isomerase</keyword>
<keyword id="KW-0511">Multifunctional enzyme</keyword>
<keyword id="KW-0521">NADP</keyword>
<keyword id="KW-0560">Oxidoreductase</keyword>
<keyword id="KW-1185">Reference proteome</keyword>
<accession>Q67WR5</accession>
<accession>Q0DAH5</accession>
<gene>
    <name type="ordered locus">Os06g0652300</name>
    <name type="ordered locus">LOC_Os06g44260</name>
    <name evidence="5" type="ORF">OsJ_22190</name>
    <name type="ORF">OSJNBa0085J13.4</name>
</gene>
<comment type="function">
    <text evidence="2">Catalyzes the two-step NADP-dependent conversion of GDP-4-dehydro-6-deoxy-D-mannose to GDP-fucose, involving an epimerase and a reductase reaction.</text>
</comment>
<comment type="catalytic activity">
    <reaction evidence="2">
        <text>GDP-beta-L-fucose + NADP(+) = GDP-4-dehydro-alpha-D-rhamnose + NADPH + H(+)</text>
        <dbReference type="Rhea" id="RHEA:18885"/>
        <dbReference type="ChEBI" id="CHEBI:15378"/>
        <dbReference type="ChEBI" id="CHEBI:57273"/>
        <dbReference type="ChEBI" id="CHEBI:57783"/>
        <dbReference type="ChEBI" id="CHEBI:57964"/>
        <dbReference type="ChEBI" id="CHEBI:58349"/>
        <dbReference type="EC" id="1.1.1.271"/>
    </reaction>
</comment>
<comment type="pathway">
    <text>Nucleotide-sugar biosynthesis; GDP-L-fucose biosynthesis via de novo pathway; GDP-L-fucose from GDP-alpha-D-mannose: step 2/2.</text>
</comment>
<comment type="subunit">
    <text evidence="1">Homodimer.</text>
</comment>
<comment type="similarity">
    <text evidence="4">Belongs to the NAD(P)-dependent epimerase/dehydratase family. Fucose synthase subfamily.</text>
</comment>
<sequence>MPSQQRSSSGSTAKAGDADGDGDAAAVSFLGDKSAKVFIAGHRGMVGSAVHRKLDALGFTNVVVRTRAELDLACQAAVEAFFAAELPRYVILAAAKVGGVHASSAAPAEYLTENLRITVNVVDAARRCGSVRKLLVLASSTIYPADAPQPTPESALLTGPPAEGSEWYAIPKIAGIKMCQAVRAEYGLDAIAAAPNNLYGPRHPFPPEHSHVIPALIRRFHRAKLEGAGEVAVWGSGAAAREFTHVDDLAEAVVVLMERYSGEEHVNVGSGEEVTVRELAEAVRGVVGYEGVVAWDAARPEGVARRVVDSGRMRKLGWEPRVALRDGIQDLYRFYLRHECGGQAHHA</sequence>
<feature type="chain" id="PRO_0000174357" description="Putative GDP-L-fucose synthase 2">
    <location>
        <begin position="1"/>
        <end position="347"/>
    </location>
</feature>
<feature type="region of interest" description="Disordered" evidence="3">
    <location>
        <begin position="1"/>
        <end position="20"/>
    </location>
</feature>
<feature type="active site" description="Proton donor/acceptor" evidence="1">
    <location>
        <position position="168"/>
    </location>
</feature>
<feature type="binding site" evidence="1">
    <location>
        <begin position="41"/>
        <end position="47"/>
    </location>
    <ligand>
        <name>NADP(+)</name>
        <dbReference type="ChEBI" id="CHEBI:58349"/>
    </ligand>
</feature>
<feature type="binding site" evidence="1">
    <location>
        <position position="172"/>
    </location>
    <ligand>
        <name>NADP(+)</name>
        <dbReference type="ChEBI" id="CHEBI:58349"/>
    </ligand>
</feature>
<feature type="binding site" evidence="1">
    <location>
        <begin position="195"/>
        <end position="198"/>
    </location>
    <ligand>
        <name>NADP(+)</name>
        <dbReference type="ChEBI" id="CHEBI:58349"/>
    </ligand>
</feature>
<feature type="binding site" evidence="1">
    <location>
        <position position="211"/>
    </location>
    <ligand>
        <name>NADP(+)</name>
        <dbReference type="ChEBI" id="CHEBI:58349"/>
    </ligand>
</feature>
<feature type="binding site" evidence="1">
    <location>
        <position position="219"/>
    </location>
    <ligand>
        <name>substrate</name>
    </ligand>
</feature>
<feature type="binding site" evidence="1">
    <location>
        <position position="234"/>
    </location>
    <ligand>
        <name>substrate</name>
    </ligand>
</feature>
<feature type="binding site" evidence="1">
    <location>
        <position position="241"/>
    </location>
    <ligand>
        <name>substrate</name>
    </ligand>
</feature>
<feature type="binding site" evidence="1">
    <location>
        <position position="301"/>
    </location>
    <ligand>
        <name>substrate</name>
    </ligand>
</feature>
<feature type="site" description="Important for catalytic activity" evidence="1">
    <location>
        <position position="139"/>
    </location>
</feature>
<feature type="site" description="Lowers pKa of active site Tyr" evidence="1">
    <location>
        <position position="172"/>
    </location>
</feature>
<dbReference type="EC" id="1.1.1.271" evidence="2"/>
<dbReference type="EMBL" id="AP003565">
    <property type="protein sequence ID" value="BAD37404.1"/>
    <property type="molecule type" value="Genomic_DNA"/>
</dbReference>
<dbReference type="EMBL" id="AP008212">
    <property type="protein sequence ID" value="BAF20148.1"/>
    <property type="molecule type" value="Genomic_DNA"/>
</dbReference>
<dbReference type="EMBL" id="AP014962">
    <property type="protein sequence ID" value="BAS98915.1"/>
    <property type="molecule type" value="Genomic_DNA"/>
</dbReference>
<dbReference type="EMBL" id="CM000143">
    <property type="protein sequence ID" value="EAZ37846.1"/>
    <property type="molecule type" value="Genomic_DNA"/>
</dbReference>
<dbReference type="RefSeq" id="XP_015641892.1">
    <property type="nucleotide sequence ID" value="XM_015786406.1"/>
</dbReference>
<dbReference type="SMR" id="Q67WR5"/>
<dbReference type="FunCoup" id="Q67WR5">
    <property type="interactions" value="1583"/>
</dbReference>
<dbReference type="STRING" id="39947.Q67WR5"/>
<dbReference type="PaxDb" id="39947-Q67WR5"/>
<dbReference type="EnsemblPlants" id="Os06t0652300-00">
    <property type="protein sequence ID" value="Os06t0652300-00"/>
    <property type="gene ID" value="Os06g0652300"/>
</dbReference>
<dbReference type="Gramene" id="Os06t0652300-00">
    <property type="protein sequence ID" value="Os06t0652300-00"/>
    <property type="gene ID" value="Os06g0652300"/>
</dbReference>
<dbReference type="KEGG" id="dosa:Os06g0652300"/>
<dbReference type="eggNOG" id="KOG1431">
    <property type="taxonomic scope" value="Eukaryota"/>
</dbReference>
<dbReference type="HOGENOM" id="CLU_007383_18_0_1"/>
<dbReference type="InParanoid" id="Q67WR5"/>
<dbReference type="OMA" id="CNLQFFR"/>
<dbReference type="OrthoDB" id="202470at2759"/>
<dbReference type="UniPathway" id="UPA00128">
    <property type="reaction ID" value="UER00191"/>
</dbReference>
<dbReference type="Proteomes" id="UP000000763">
    <property type="component" value="Chromosome 6"/>
</dbReference>
<dbReference type="Proteomes" id="UP000007752">
    <property type="component" value="Chromosome 6"/>
</dbReference>
<dbReference type="Proteomes" id="UP000059680">
    <property type="component" value="Chromosome 6"/>
</dbReference>
<dbReference type="GO" id="GO:0050577">
    <property type="term" value="F:GDP-L-fucose synthase activity"/>
    <property type="evidence" value="ECO:0000318"/>
    <property type="project" value="GO_Central"/>
</dbReference>
<dbReference type="GO" id="GO:0016853">
    <property type="term" value="F:isomerase activity"/>
    <property type="evidence" value="ECO:0007669"/>
    <property type="project" value="UniProtKB-KW"/>
</dbReference>
<dbReference type="GO" id="GO:0042351">
    <property type="term" value="P:'de novo' GDP-L-fucose biosynthetic process"/>
    <property type="evidence" value="ECO:0007669"/>
    <property type="project" value="UniProtKB-UniPathway"/>
</dbReference>
<dbReference type="CDD" id="cd05239">
    <property type="entry name" value="GDP_FS_SDR_e"/>
    <property type="match status" value="1"/>
</dbReference>
<dbReference type="Gene3D" id="3.40.50.720">
    <property type="entry name" value="NAD(P)-binding Rossmann-like Domain"/>
    <property type="match status" value="1"/>
</dbReference>
<dbReference type="Gene3D" id="3.90.25.10">
    <property type="entry name" value="UDP-galactose 4-epimerase, domain 1"/>
    <property type="match status" value="1"/>
</dbReference>
<dbReference type="HAMAP" id="MF_00956">
    <property type="entry name" value="GDP_fucose_synth"/>
    <property type="match status" value="1"/>
</dbReference>
<dbReference type="InterPro" id="IPR001509">
    <property type="entry name" value="Epimerase_deHydtase"/>
</dbReference>
<dbReference type="InterPro" id="IPR028614">
    <property type="entry name" value="GDP_fucose/colitose_synth"/>
</dbReference>
<dbReference type="InterPro" id="IPR036291">
    <property type="entry name" value="NAD(P)-bd_dom_sf"/>
</dbReference>
<dbReference type="PANTHER" id="PTHR43238">
    <property type="entry name" value="GDP-L-FUCOSE SYNTHASE"/>
    <property type="match status" value="1"/>
</dbReference>
<dbReference type="PANTHER" id="PTHR43238:SF6">
    <property type="entry name" value="GDP-L-FUCOSE SYNTHASE 2-RELATED"/>
    <property type="match status" value="1"/>
</dbReference>
<dbReference type="Pfam" id="PF01370">
    <property type="entry name" value="Epimerase"/>
    <property type="match status" value="1"/>
</dbReference>
<dbReference type="SUPFAM" id="SSF51735">
    <property type="entry name" value="NAD(P)-binding Rossmann-fold domains"/>
    <property type="match status" value="1"/>
</dbReference>
<proteinExistence type="inferred from homology"/>
<name>FCL2_ORYSJ</name>
<evidence type="ECO:0000250" key="1"/>
<evidence type="ECO:0000250" key="2">
    <source>
        <dbReference type="UniProtKB" id="Q9LMU0"/>
    </source>
</evidence>
<evidence type="ECO:0000256" key="3">
    <source>
        <dbReference type="SAM" id="MobiDB-lite"/>
    </source>
</evidence>
<evidence type="ECO:0000305" key="4"/>
<evidence type="ECO:0000312" key="5">
    <source>
        <dbReference type="EMBL" id="EAZ37846.1"/>
    </source>
</evidence>
<reference key="1">
    <citation type="journal article" date="2005" name="Nature">
        <title>The map-based sequence of the rice genome.</title>
        <authorList>
            <consortium name="International rice genome sequencing project (IRGSP)"/>
        </authorList>
    </citation>
    <scope>NUCLEOTIDE SEQUENCE [LARGE SCALE GENOMIC DNA]</scope>
    <source>
        <strain>cv. Nipponbare</strain>
    </source>
</reference>
<reference key="2">
    <citation type="journal article" date="2008" name="Nucleic Acids Res.">
        <title>The rice annotation project database (RAP-DB): 2008 update.</title>
        <authorList>
            <consortium name="The rice annotation project (RAP)"/>
        </authorList>
    </citation>
    <scope>GENOME REANNOTATION</scope>
    <source>
        <strain>cv. Nipponbare</strain>
    </source>
</reference>
<reference key="3">
    <citation type="journal article" date="2013" name="Rice">
        <title>Improvement of the Oryza sativa Nipponbare reference genome using next generation sequence and optical map data.</title>
        <authorList>
            <person name="Kawahara Y."/>
            <person name="de la Bastide M."/>
            <person name="Hamilton J.P."/>
            <person name="Kanamori H."/>
            <person name="McCombie W.R."/>
            <person name="Ouyang S."/>
            <person name="Schwartz D.C."/>
            <person name="Tanaka T."/>
            <person name="Wu J."/>
            <person name="Zhou S."/>
            <person name="Childs K.L."/>
            <person name="Davidson R.M."/>
            <person name="Lin H."/>
            <person name="Quesada-Ocampo L."/>
            <person name="Vaillancourt B."/>
            <person name="Sakai H."/>
            <person name="Lee S.S."/>
            <person name="Kim J."/>
            <person name="Numa H."/>
            <person name="Itoh T."/>
            <person name="Buell C.R."/>
            <person name="Matsumoto T."/>
        </authorList>
    </citation>
    <scope>GENOME REANNOTATION</scope>
    <source>
        <strain>cv. Nipponbare</strain>
    </source>
</reference>
<reference key="4">
    <citation type="journal article" date="2005" name="PLoS Biol.">
        <title>The genomes of Oryza sativa: a history of duplications.</title>
        <authorList>
            <person name="Yu J."/>
            <person name="Wang J."/>
            <person name="Lin W."/>
            <person name="Li S."/>
            <person name="Li H."/>
            <person name="Zhou J."/>
            <person name="Ni P."/>
            <person name="Dong W."/>
            <person name="Hu S."/>
            <person name="Zeng C."/>
            <person name="Zhang J."/>
            <person name="Zhang Y."/>
            <person name="Li R."/>
            <person name="Xu Z."/>
            <person name="Li S."/>
            <person name="Li X."/>
            <person name="Zheng H."/>
            <person name="Cong L."/>
            <person name="Lin L."/>
            <person name="Yin J."/>
            <person name="Geng J."/>
            <person name="Li G."/>
            <person name="Shi J."/>
            <person name="Liu J."/>
            <person name="Lv H."/>
            <person name="Li J."/>
            <person name="Wang J."/>
            <person name="Deng Y."/>
            <person name="Ran L."/>
            <person name="Shi X."/>
            <person name="Wang X."/>
            <person name="Wu Q."/>
            <person name="Li C."/>
            <person name="Ren X."/>
            <person name="Wang J."/>
            <person name="Wang X."/>
            <person name="Li D."/>
            <person name="Liu D."/>
            <person name="Zhang X."/>
            <person name="Ji Z."/>
            <person name="Zhao W."/>
            <person name="Sun Y."/>
            <person name="Zhang Z."/>
            <person name="Bao J."/>
            <person name="Han Y."/>
            <person name="Dong L."/>
            <person name="Ji J."/>
            <person name="Chen P."/>
            <person name="Wu S."/>
            <person name="Liu J."/>
            <person name="Xiao Y."/>
            <person name="Bu D."/>
            <person name="Tan J."/>
            <person name="Yang L."/>
            <person name="Ye C."/>
            <person name="Zhang J."/>
            <person name="Xu J."/>
            <person name="Zhou Y."/>
            <person name="Yu Y."/>
            <person name="Zhang B."/>
            <person name="Zhuang S."/>
            <person name="Wei H."/>
            <person name="Liu B."/>
            <person name="Lei M."/>
            <person name="Yu H."/>
            <person name="Li Y."/>
            <person name="Xu H."/>
            <person name="Wei S."/>
            <person name="He X."/>
            <person name="Fang L."/>
            <person name="Zhang Z."/>
            <person name="Zhang Y."/>
            <person name="Huang X."/>
            <person name="Su Z."/>
            <person name="Tong W."/>
            <person name="Li J."/>
            <person name="Tong Z."/>
            <person name="Li S."/>
            <person name="Ye J."/>
            <person name="Wang L."/>
            <person name="Fang L."/>
            <person name="Lei T."/>
            <person name="Chen C.-S."/>
            <person name="Chen H.-C."/>
            <person name="Xu Z."/>
            <person name="Li H."/>
            <person name="Huang H."/>
            <person name="Zhang F."/>
            <person name="Xu H."/>
            <person name="Li N."/>
            <person name="Zhao C."/>
            <person name="Li S."/>
            <person name="Dong L."/>
            <person name="Huang Y."/>
            <person name="Li L."/>
            <person name="Xi Y."/>
            <person name="Qi Q."/>
            <person name="Li W."/>
            <person name="Zhang B."/>
            <person name="Hu W."/>
            <person name="Zhang Y."/>
            <person name="Tian X."/>
            <person name="Jiao Y."/>
            <person name="Liang X."/>
            <person name="Jin J."/>
            <person name="Gao L."/>
            <person name="Zheng W."/>
            <person name="Hao B."/>
            <person name="Liu S.-M."/>
            <person name="Wang W."/>
            <person name="Yuan L."/>
            <person name="Cao M."/>
            <person name="McDermott J."/>
            <person name="Samudrala R."/>
            <person name="Wang J."/>
            <person name="Wong G.K.-S."/>
            <person name="Yang H."/>
        </authorList>
    </citation>
    <scope>NUCLEOTIDE SEQUENCE [LARGE SCALE GENOMIC DNA]</scope>
    <source>
        <strain>cv. Nipponbare</strain>
    </source>
</reference>